<name>COXX_NOCSJ</name>
<gene>
    <name evidence="1" type="primary">ctaB</name>
    <name type="ordered locus">Noca_2542</name>
</gene>
<organism>
    <name type="scientific">Nocardioides sp. (strain ATCC BAA-499 / JS614)</name>
    <dbReference type="NCBI Taxonomy" id="196162"/>
    <lineage>
        <taxon>Bacteria</taxon>
        <taxon>Bacillati</taxon>
        <taxon>Actinomycetota</taxon>
        <taxon>Actinomycetes</taxon>
        <taxon>Propionibacteriales</taxon>
        <taxon>Nocardioidaceae</taxon>
        <taxon>Nocardioides</taxon>
    </lineage>
</organism>
<comment type="function">
    <text evidence="1">Converts heme B (protoheme IX) to heme O by substitution of the vinyl group on carbon 2 of heme B porphyrin ring with a hydroxyethyl farnesyl side group.</text>
</comment>
<comment type="catalytic activity">
    <reaction evidence="1">
        <text>heme b + (2E,6E)-farnesyl diphosphate + H2O = Fe(II)-heme o + diphosphate</text>
        <dbReference type="Rhea" id="RHEA:28070"/>
        <dbReference type="ChEBI" id="CHEBI:15377"/>
        <dbReference type="ChEBI" id="CHEBI:33019"/>
        <dbReference type="ChEBI" id="CHEBI:60344"/>
        <dbReference type="ChEBI" id="CHEBI:60530"/>
        <dbReference type="ChEBI" id="CHEBI:175763"/>
        <dbReference type="EC" id="2.5.1.141"/>
    </reaction>
</comment>
<comment type="pathway">
    <text evidence="1">Porphyrin-containing compound metabolism; heme O biosynthesis; heme O from protoheme: step 1/1.</text>
</comment>
<comment type="subcellular location">
    <subcellularLocation>
        <location evidence="1">Cell membrane</location>
        <topology evidence="1">Multi-pass membrane protein</topology>
    </subcellularLocation>
</comment>
<comment type="miscellaneous">
    <text evidence="1">Carbon 2 of the heme B porphyrin ring is defined according to the Fischer nomenclature.</text>
</comment>
<comment type="similarity">
    <text evidence="1">Belongs to the UbiA prenyltransferase family. Protoheme IX farnesyltransferase subfamily.</text>
</comment>
<reference key="1">
    <citation type="submission" date="2006-12" db="EMBL/GenBank/DDBJ databases">
        <title>Complete sequence of chromosome 1 of Nocardioides sp. JS614.</title>
        <authorList>
            <person name="Copeland A."/>
            <person name="Lucas S."/>
            <person name="Lapidus A."/>
            <person name="Barry K."/>
            <person name="Detter J.C."/>
            <person name="Glavina del Rio T."/>
            <person name="Hammon N."/>
            <person name="Israni S."/>
            <person name="Dalin E."/>
            <person name="Tice H."/>
            <person name="Pitluck S."/>
            <person name="Thompson L.S."/>
            <person name="Brettin T."/>
            <person name="Bruce D."/>
            <person name="Han C."/>
            <person name="Tapia R."/>
            <person name="Schmutz J."/>
            <person name="Larimer F."/>
            <person name="Land M."/>
            <person name="Hauser L."/>
            <person name="Kyrpides N."/>
            <person name="Kim E."/>
            <person name="Mattes T."/>
            <person name="Gossett J."/>
            <person name="Richardson P."/>
        </authorList>
    </citation>
    <scope>NUCLEOTIDE SEQUENCE [LARGE SCALE GENOMIC DNA]</scope>
    <source>
        <strain>ATCC BAA-499 / JS614</strain>
    </source>
</reference>
<sequence length="314" mass="34316">MTYVGQSASAAQQSVAERASVKDVLAAYVGLTKPRVIELLLLTTVPVMFFADRGIPELWLVVATVVGGAFSAGSASVFNCVYDRDIDEQMRRTRRRALPRHIVSPAAALVFGFVLGILSTVILYVWVNPLSAALSVAANAFYVLVYTMLLKRRTTQNIVWGGLAGCFPALIGWTAVTGSLSWVPVVLFAVVFFWTPPHTWALALRYREDYANVDVPMLPVVAPAREVGRQVVIYSWVMVATSLLLWPVAGTGIFYPIAAGVLGAVFLLEAHRMWARSRDTESLSVIQPMRLFHSSNLYLSLLFVAVALDPLLAG</sequence>
<evidence type="ECO:0000255" key="1">
    <source>
        <dbReference type="HAMAP-Rule" id="MF_00154"/>
    </source>
</evidence>
<proteinExistence type="inferred from homology"/>
<accession>A1SJR1</accession>
<protein>
    <recommendedName>
        <fullName evidence="1">Protoheme IX farnesyltransferase</fullName>
        <ecNumber evidence="1">2.5.1.141</ecNumber>
    </recommendedName>
    <alternativeName>
        <fullName evidence="1">Heme B farnesyltransferase</fullName>
    </alternativeName>
    <alternativeName>
        <fullName evidence="1">Heme O synthase</fullName>
    </alternativeName>
</protein>
<dbReference type="EC" id="2.5.1.141" evidence="1"/>
<dbReference type="EMBL" id="CP000509">
    <property type="protein sequence ID" value="ABL82046.1"/>
    <property type="molecule type" value="Genomic_DNA"/>
</dbReference>
<dbReference type="RefSeq" id="WP_011755986.1">
    <property type="nucleotide sequence ID" value="NC_008699.1"/>
</dbReference>
<dbReference type="SMR" id="A1SJR1"/>
<dbReference type="STRING" id="196162.Noca_2542"/>
<dbReference type="KEGG" id="nca:Noca_2542"/>
<dbReference type="eggNOG" id="COG0109">
    <property type="taxonomic scope" value="Bacteria"/>
</dbReference>
<dbReference type="HOGENOM" id="CLU_029631_0_1_11"/>
<dbReference type="OrthoDB" id="9814417at2"/>
<dbReference type="UniPathway" id="UPA00834">
    <property type="reaction ID" value="UER00712"/>
</dbReference>
<dbReference type="Proteomes" id="UP000000640">
    <property type="component" value="Chromosome"/>
</dbReference>
<dbReference type="GO" id="GO:0005886">
    <property type="term" value="C:plasma membrane"/>
    <property type="evidence" value="ECO:0007669"/>
    <property type="project" value="UniProtKB-SubCell"/>
</dbReference>
<dbReference type="GO" id="GO:0008495">
    <property type="term" value="F:protoheme IX farnesyltransferase activity"/>
    <property type="evidence" value="ECO:0007669"/>
    <property type="project" value="UniProtKB-UniRule"/>
</dbReference>
<dbReference type="GO" id="GO:0048034">
    <property type="term" value="P:heme O biosynthetic process"/>
    <property type="evidence" value="ECO:0007669"/>
    <property type="project" value="UniProtKB-UniRule"/>
</dbReference>
<dbReference type="CDD" id="cd13957">
    <property type="entry name" value="PT_UbiA_Cox10"/>
    <property type="match status" value="1"/>
</dbReference>
<dbReference type="FunFam" id="1.10.357.140:FF:000001">
    <property type="entry name" value="Protoheme IX farnesyltransferase"/>
    <property type="match status" value="1"/>
</dbReference>
<dbReference type="Gene3D" id="1.10.357.140">
    <property type="entry name" value="UbiA prenyltransferase"/>
    <property type="match status" value="1"/>
</dbReference>
<dbReference type="HAMAP" id="MF_00154">
    <property type="entry name" value="CyoE_CtaB"/>
    <property type="match status" value="1"/>
</dbReference>
<dbReference type="InterPro" id="IPR006369">
    <property type="entry name" value="Protohaem_IX_farnesylTrfase"/>
</dbReference>
<dbReference type="InterPro" id="IPR000537">
    <property type="entry name" value="UbiA_prenyltransferase"/>
</dbReference>
<dbReference type="InterPro" id="IPR044878">
    <property type="entry name" value="UbiA_sf"/>
</dbReference>
<dbReference type="NCBIfam" id="TIGR01473">
    <property type="entry name" value="cyoE_ctaB"/>
    <property type="match status" value="1"/>
</dbReference>
<dbReference type="NCBIfam" id="NF003349">
    <property type="entry name" value="PRK04375.1-2"/>
    <property type="match status" value="1"/>
</dbReference>
<dbReference type="PANTHER" id="PTHR43448:SF7">
    <property type="entry name" value="4-HYDROXYBENZOATE SOLANESYLTRANSFERASE"/>
    <property type="match status" value="1"/>
</dbReference>
<dbReference type="PANTHER" id="PTHR43448">
    <property type="entry name" value="PROTOHEME IX FARNESYLTRANSFERASE, MITOCHONDRIAL"/>
    <property type="match status" value="1"/>
</dbReference>
<dbReference type="Pfam" id="PF01040">
    <property type="entry name" value="UbiA"/>
    <property type="match status" value="1"/>
</dbReference>
<keyword id="KW-1003">Cell membrane</keyword>
<keyword id="KW-0350">Heme biosynthesis</keyword>
<keyword id="KW-0472">Membrane</keyword>
<keyword id="KW-1185">Reference proteome</keyword>
<keyword id="KW-0808">Transferase</keyword>
<keyword id="KW-0812">Transmembrane</keyword>
<keyword id="KW-1133">Transmembrane helix</keyword>
<feature type="chain" id="PRO_0000327103" description="Protoheme IX farnesyltransferase">
    <location>
        <begin position="1"/>
        <end position="314"/>
    </location>
</feature>
<feature type="transmembrane region" description="Helical" evidence="1">
    <location>
        <begin position="58"/>
        <end position="78"/>
    </location>
</feature>
<feature type="transmembrane region" description="Helical" evidence="1">
    <location>
        <begin position="107"/>
        <end position="127"/>
    </location>
</feature>
<feature type="transmembrane region" description="Helical" evidence="1">
    <location>
        <begin position="130"/>
        <end position="150"/>
    </location>
</feature>
<feature type="transmembrane region" description="Helical" evidence="1">
    <location>
        <begin position="173"/>
        <end position="193"/>
    </location>
</feature>
<feature type="transmembrane region" description="Helical" evidence="1">
    <location>
        <begin position="227"/>
        <end position="247"/>
    </location>
</feature>
<feature type="transmembrane region" description="Helical" evidence="1">
    <location>
        <begin position="248"/>
        <end position="268"/>
    </location>
</feature>
<feature type="transmembrane region" description="Helical" evidence="1">
    <location>
        <begin position="294"/>
        <end position="314"/>
    </location>
</feature>